<organism>
    <name type="scientific">Streptococcus pyogenes serotype M49 (strain NZ131)</name>
    <dbReference type="NCBI Taxonomy" id="471876"/>
    <lineage>
        <taxon>Bacteria</taxon>
        <taxon>Bacillati</taxon>
        <taxon>Bacillota</taxon>
        <taxon>Bacilli</taxon>
        <taxon>Lactobacillales</taxon>
        <taxon>Streptococcaceae</taxon>
        <taxon>Streptococcus</taxon>
    </lineage>
</organism>
<feature type="chain" id="PRO_1000099167" description="GTPase Der">
    <location>
        <begin position="1"/>
        <end position="436"/>
    </location>
</feature>
<feature type="domain" description="EngA-type G 1">
    <location>
        <begin position="4"/>
        <end position="167"/>
    </location>
</feature>
<feature type="domain" description="EngA-type G 2">
    <location>
        <begin position="175"/>
        <end position="351"/>
    </location>
</feature>
<feature type="domain" description="KH-like" evidence="1">
    <location>
        <begin position="352"/>
        <end position="436"/>
    </location>
</feature>
<feature type="binding site" evidence="1">
    <location>
        <begin position="10"/>
        <end position="17"/>
    </location>
    <ligand>
        <name>GTP</name>
        <dbReference type="ChEBI" id="CHEBI:37565"/>
        <label>1</label>
    </ligand>
</feature>
<feature type="binding site" evidence="1">
    <location>
        <begin position="57"/>
        <end position="61"/>
    </location>
    <ligand>
        <name>GTP</name>
        <dbReference type="ChEBI" id="CHEBI:37565"/>
        <label>1</label>
    </ligand>
</feature>
<feature type="binding site" evidence="1">
    <location>
        <begin position="119"/>
        <end position="122"/>
    </location>
    <ligand>
        <name>GTP</name>
        <dbReference type="ChEBI" id="CHEBI:37565"/>
        <label>1</label>
    </ligand>
</feature>
<feature type="binding site" evidence="1">
    <location>
        <begin position="181"/>
        <end position="188"/>
    </location>
    <ligand>
        <name>GTP</name>
        <dbReference type="ChEBI" id="CHEBI:37565"/>
        <label>2</label>
    </ligand>
</feature>
<feature type="binding site" evidence="1">
    <location>
        <begin position="229"/>
        <end position="233"/>
    </location>
    <ligand>
        <name>GTP</name>
        <dbReference type="ChEBI" id="CHEBI:37565"/>
        <label>2</label>
    </ligand>
</feature>
<feature type="binding site" evidence="1">
    <location>
        <begin position="294"/>
        <end position="297"/>
    </location>
    <ligand>
        <name>GTP</name>
        <dbReference type="ChEBI" id="CHEBI:37565"/>
        <label>2</label>
    </ligand>
</feature>
<keyword id="KW-0342">GTP-binding</keyword>
<keyword id="KW-0547">Nucleotide-binding</keyword>
<keyword id="KW-0677">Repeat</keyword>
<keyword id="KW-0690">Ribosome biogenesis</keyword>
<comment type="function">
    <text evidence="1">GTPase that plays an essential role in the late steps of ribosome biogenesis.</text>
</comment>
<comment type="subunit">
    <text evidence="1">Associates with the 50S ribosomal subunit.</text>
</comment>
<comment type="similarity">
    <text evidence="1">Belongs to the TRAFAC class TrmE-Era-EngA-EngB-Septin-like GTPase superfamily. EngA (Der) GTPase family.</text>
</comment>
<reference key="1">
    <citation type="journal article" date="2008" name="J. Bacteriol.">
        <title>Genome sequence of a nephritogenic and highly transformable M49 strain of Streptococcus pyogenes.</title>
        <authorList>
            <person name="McShan W.M."/>
            <person name="Ferretti J.J."/>
            <person name="Karasawa T."/>
            <person name="Suvorov A.N."/>
            <person name="Lin S."/>
            <person name="Qin B."/>
            <person name="Jia H."/>
            <person name="Kenton S."/>
            <person name="Najar F."/>
            <person name="Wu H."/>
            <person name="Scott J."/>
            <person name="Roe B.A."/>
            <person name="Savic D.J."/>
        </authorList>
    </citation>
    <scope>NUCLEOTIDE SEQUENCE [LARGE SCALE GENOMIC DNA]</scope>
    <source>
        <strain>NZ131</strain>
    </source>
</reference>
<accession>B5XJW0</accession>
<protein>
    <recommendedName>
        <fullName evidence="1">GTPase Der</fullName>
    </recommendedName>
    <alternativeName>
        <fullName evidence="1">GTP-binding protein EngA</fullName>
    </alternativeName>
</protein>
<sequence length="436" mass="48802">MVLPTVAIVGRPNVGKSTLFNRIAGERISIVEDVEGVTRDRIYATGEWLNRQFSLIDTGGIDDVDAPFMEQIKHQAQIAMEEADVIVFVVSGKEGVTDADEYVSKILYRTNTPVILAVNKVDNPEMRNDIYDFYSLGLGDPYPVSSVHGIGTGDVLDAIVENLPVEEAEENDDIIRFSLIGRPNVGKSSLINAILGEDRVIASPVAGTTRDAIDTHFTDADGQEFTMIDTAGMRKSGKIYENTEKYSVMRAMRAIDRSDVVLMVINAEEGIREYDKRIAGFAHEAGKGMIIVVNKWDTIDKDNHTVAKWEADIRDQFQFLTYAPIIFVSALTKQRLNKLPDLIKRISESQNKRIPSAVLNDVIMDAIAINPTPTDKGKRLKIFYATQVSVKPPTFVVFVNEEELMHFSYLRFLENQIRAAFTFEGTPIHLIARKRK</sequence>
<gene>
    <name evidence="1" type="primary">der</name>
    <name type="synonym">engA</name>
    <name type="ordered locus">Spy49_0284</name>
</gene>
<dbReference type="EMBL" id="CP000829">
    <property type="protein sequence ID" value="ACI60622.1"/>
    <property type="molecule type" value="Genomic_DNA"/>
</dbReference>
<dbReference type="SMR" id="B5XJW0"/>
<dbReference type="KEGG" id="soz:Spy49_0284"/>
<dbReference type="HOGENOM" id="CLU_016077_6_2_9"/>
<dbReference type="Proteomes" id="UP000001039">
    <property type="component" value="Chromosome"/>
</dbReference>
<dbReference type="GO" id="GO:0005525">
    <property type="term" value="F:GTP binding"/>
    <property type="evidence" value="ECO:0007669"/>
    <property type="project" value="UniProtKB-UniRule"/>
</dbReference>
<dbReference type="GO" id="GO:0043022">
    <property type="term" value="F:ribosome binding"/>
    <property type="evidence" value="ECO:0007669"/>
    <property type="project" value="TreeGrafter"/>
</dbReference>
<dbReference type="GO" id="GO:0042254">
    <property type="term" value="P:ribosome biogenesis"/>
    <property type="evidence" value="ECO:0007669"/>
    <property type="project" value="UniProtKB-KW"/>
</dbReference>
<dbReference type="CDD" id="cd01894">
    <property type="entry name" value="EngA1"/>
    <property type="match status" value="1"/>
</dbReference>
<dbReference type="CDD" id="cd01895">
    <property type="entry name" value="EngA2"/>
    <property type="match status" value="1"/>
</dbReference>
<dbReference type="FunFam" id="3.30.300.20:FF:000004">
    <property type="entry name" value="GTPase Der"/>
    <property type="match status" value="1"/>
</dbReference>
<dbReference type="FunFam" id="3.40.50.300:FF:000040">
    <property type="entry name" value="GTPase Der"/>
    <property type="match status" value="1"/>
</dbReference>
<dbReference type="FunFam" id="3.40.50.300:FF:000057">
    <property type="entry name" value="GTPase Der"/>
    <property type="match status" value="1"/>
</dbReference>
<dbReference type="Gene3D" id="3.30.300.20">
    <property type="match status" value="1"/>
</dbReference>
<dbReference type="Gene3D" id="3.40.50.300">
    <property type="entry name" value="P-loop containing nucleotide triphosphate hydrolases"/>
    <property type="match status" value="2"/>
</dbReference>
<dbReference type="HAMAP" id="MF_00195">
    <property type="entry name" value="GTPase_Der"/>
    <property type="match status" value="1"/>
</dbReference>
<dbReference type="InterPro" id="IPR031166">
    <property type="entry name" value="G_ENGA"/>
</dbReference>
<dbReference type="InterPro" id="IPR006073">
    <property type="entry name" value="GTP-bd"/>
</dbReference>
<dbReference type="InterPro" id="IPR016484">
    <property type="entry name" value="GTPase_Der"/>
</dbReference>
<dbReference type="InterPro" id="IPR032859">
    <property type="entry name" value="KH_dom-like"/>
</dbReference>
<dbReference type="InterPro" id="IPR015946">
    <property type="entry name" value="KH_dom-like_a/b"/>
</dbReference>
<dbReference type="InterPro" id="IPR027417">
    <property type="entry name" value="P-loop_NTPase"/>
</dbReference>
<dbReference type="InterPro" id="IPR005225">
    <property type="entry name" value="Small_GTP-bd"/>
</dbReference>
<dbReference type="NCBIfam" id="TIGR03594">
    <property type="entry name" value="GTPase_EngA"/>
    <property type="match status" value="1"/>
</dbReference>
<dbReference type="NCBIfam" id="TIGR00231">
    <property type="entry name" value="small_GTP"/>
    <property type="match status" value="2"/>
</dbReference>
<dbReference type="PANTHER" id="PTHR43834">
    <property type="entry name" value="GTPASE DER"/>
    <property type="match status" value="1"/>
</dbReference>
<dbReference type="PANTHER" id="PTHR43834:SF6">
    <property type="entry name" value="GTPASE DER"/>
    <property type="match status" value="1"/>
</dbReference>
<dbReference type="Pfam" id="PF14714">
    <property type="entry name" value="KH_dom-like"/>
    <property type="match status" value="1"/>
</dbReference>
<dbReference type="Pfam" id="PF01926">
    <property type="entry name" value="MMR_HSR1"/>
    <property type="match status" value="2"/>
</dbReference>
<dbReference type="PIRSF" id="PIRSF006485">
    <property type="entry name" value="GTP-binding_EngA"/>
    <property type="match status" value="1"/>
</dbReference>
<dbReference type="PRINTS" id="PR00326">
    <property type="entry name" value="GTP1OBG"/>
</dbReference>
<dbReference type="SUPFAM" id="SSF52540">
    <property type="entry name" value="P-loop containing nucleoside triphosphate hydrolases"/>
    <property type="match status" value="2"/>
</dbReference>
<dbReference type="PROSITE" id="PS51712">
    <property type="entry name" value="G_ENGA"/>
    <property type="match status" value="2"/>
</dbReference>
<proteinExistence type="inferred from homology"/>
<name>DER_STRPZ</name>
<evidence type="ECO:0000255" key="1">
    <source>
        <dbReference type="HAMAP-Rule" id="MF_00195"/>
    </source>
</evidence>